<reference key="1">
    <citation type="journal article" date="1992" name="Proc. Natl. Acad. Sci. U.S.A.">
        <title>Extensive variation in evolutionary rate of rbcL gene sequences among seed plants.</title>
        <authorList>
            <person name="Bousquet J."/>
            <person name="Strauss S.H."/>
            <person name="Doerksen A.H."/>
            <person name="Price R.A."/>
        </authorList>
    </citation>
    <scope>NUCLEOTIDE SEQUENCE [GENOMIC DNA]</scope>
</reference>
<organism>
    <name type="scientific">Pinus longaeva</name>
    <name type="common">Great Basin bristlecone pine</name>
    <name type="synonym">Pinus aristata var. longaeva</name>
    <dbReference type="NCBI Taxonomy" id="3344"/>
    <lineage>
        <taxon>Eukaryota</taxon>
        <taxon>Viridiplantae</taxon>
        <taxon>Streptophyta</taxon>
        <taxon>Embryophyta</taxon>
        <taxon>Tracheophyta</taxon>
        <taxon>Spermatophyta</taxon>
        <taxon>Pinopsida</taxon>
        <taxon>Pinidae</taxon>
        <taxon>Conifers I</taxon>
        <taxon>Pinales</taxon>
        <taxon>Pinaceae</taxon>
        <taxon>Pinus</taxon>
        <taxon>Pinus subgen. Strobus</taxon>
    </lineage>
</organism>
<geneLocation type="chloroplast"/>
<dbReference type="EC" id="4.1.1.39" evidence="1"/>
<dbReference type="EMBL" id="X58132">
    <property type="protein sequence ID" value="CAA41140.1"/>
    <property type="molecule type" value="Genomic_DNA"/>
</dbReference>
<dbReference type="PIR" id="D46161">
    <property type="entry name" value="RKSZLP"/>
</dbReference>
<dbReference type="SMR" id="P24677"/>
<dbReference type="GO" id="GO:0009507">
    <property type="term" value="C:chloroplast"/>
    <property type="evidence" value="ECO:0007669"/>
    <property type="project" value="UniProtKB-SubCell"/>
</dbReference>
<dbReference type="GO" id="GO:0000287">
    <property type="term" value="F:magnesium ion binding"/>
    <property type="evidence" value="ECO:0007669"/>
    <property type="project" value="UniProtKB-UniRule"/>
</dbReference>
<dbReference type="GO" id="GO:0004497">
    <property type="term" value="F:monooxygenase activity"/>
    <property type="evidence" value="ECO:0007669"/>
    <property type="project" value="UniProtKB-KW"/>
</dbReference>
<dbReference type="GO" id="GO:0016984">
    <property type="term" value="F:ribulose-bisphosphate carboxylase activity"/>
    <property type="evidence" value="ECO:0007669"/>
    <property type="project" value="UniProtKB-UniRule"/>
</dbReference>
<dbReference type="GO" id="GO:0009853">
    <property type="term" value="P:photorespiration"/>
    <property type="evidence" value="ECO:0007669"/>
    <property type="project" value="UniProtKB-KW"/>
</dbReference>
<dbReference type="GO" id="GO:0019253">
    <property type="term" value="P:reductive pentose-phosphate cycle"/>
    <property type="evidence" value="ECO:0007669"/>
    <property type="project" value="UniProtKB-UniRule"/>
</dbReference>
<dbReference type="CDD" id="cd08212">
    <property type="entry name" value="RuBisCO_large_I"/>
    <property type="match status" value="1"/>
</dbReference>
<dbReference type="FunFam" id="3.20.20.110:FF:000001">
    <property type="entry name" value="Ribulose bisphosphate carboxylase large chain"/>
    <property type="match status" value="1"/>
</dbReference>
<dbReference type="FunFam" id="3.30.70.150:FF:000001">
    <property type="entry name" value="Ribulose bisphosphate carboxylase large chain"/>
    <property type="match status" value="1"/>
</dbReference>
<dbReference type="Gene3D" id="3.20.20.110">
    <property type="entry name" value="Ribulose bisphosphate carboxylase, large subunit, C-terminal domain"/>
    <property type="match status" value="1"/>
</dbReference>
<dbReference type="Gene3D" id="3.30.70.150">
    <property type="entry name" value="RuBisCO large subunit, N-terminal domain"/>
    <property type="match status" value="1"/>
</dbReference>
<dbReference type="HAMAP" id="MF_01338">
    <property type="entry name" value="RuBisCO_L_type1"/>
    <property type="match status" value="1"/>
</dbReference>
<dbReference type="InterPro" id="IPR033966">
    <property type="entry name" value="RuBisCO"/>
</dbReference>
<dbReference type="InterPro" id="IPR020878">
    <property type="entry name" value="RuBisCo_large_chain_AS"/>
</dbReference>
<dbReference type="InterPro" id="IPR000685">
    <property type="entry name" value="RuBisCO_lsu_C"/>
</dbReference>
<dbReference type="InterPro" id="IPR036376">
    <property type="entry name" value="RuBisCO_lsu_C_sf"/>
</dbReference>
<dbReference type="InterPro" id="IPR017443">
    <property type="entry name" value="RuBisCO_lsu_fd_N"/>
</dbReference>
<dbReference type="InterPro" id="IPR036422">
    <property type="entry name" value="RuBisCO_lsu_N_sf"/>
</dbReference>
<dbReference type="InterPro" id="IPR020888">
    <property type="entry name" value="RuBisCO_lsuI"/>
</dbReference>
<dbReference type="NCBIfam" id="NF003252">
    <property type="entry name" value="PRK04208.1"/>
    <property type="match status" value="1"/>
</dbReference>
<dbReference type="PANTHER" id="PTHR42704">
    <property type="entry name" value="RIBULOSE BISPHOSPHATE CARBOXYLASE"/>
    <property type="match status" value="1"/>
</dbReference>
<dbReference type="PANTHER" id="PTHR42704:SF15">
    <property type="entry name" value="RIBULOSE BISPHOSPHATE CARBOXYLASE LARGE CHAIN"/>
    <property type="match status" value="1"/>
</dbReference>
<dbReference type="Pfam" id="PF00016">
    <property type="entry name" value="RuBisCO_large"/>
    <property type="match status" value="1"/>
</dbReference>
<dbReference type="Pfam" id="PF02788">
    <property type="entry name" value="RuBisCO_large_N"/>
    <property type="match status" value="1"/>
</dbReference>
<dbReference type="SFLD" id="SFLDG01052">
    <property type="entry name" value="RuBisCO"/>
    <property type="match status" value="1"/>
</dbReference>
<dbReference type="SFLD" id="SFLDS00014">
    <property type="entry name" value="RuBisCO"/>
    <property type="match status" value="1"/>
</dbReference>
<dbReference type="SFLD" id="SFLDG00301">
    <property type="entry name" value="RuBisCO-like_proteins"/>
    <property type="match status" value="1"/>
</dbReference>
<dbReference type="SUPFAM" id="SSF51649">
    <property type="entry name" value="RuBisCo, C-terminal domain"/>
    <property type="match status" value="1"/>
</dbReference>
<dbReference type="SUPFAM" id="SSF54966">
    <property type="entry name" value="RuBisCO, large subunit, small (N-terminal) domain"/>
    <property type="match status" value="1"/>
</dbReference>
<dbReference type="PROSITE" id="PS00157">
    <property type="entry name" value="RUBISCO_LARGE"/>
    <property type="match status" value="1"/>
</dbReference>
<accession>P24677</accession>
<comment type="function">
    <text evidence="1">RuBisCO catalyzes two reactions: the carboxylation of D-ribulose 1,5-bisphosphate, the primary event in carbon dioxide fixation, as well as the oxidative fragmentation of the pentose substrate in the photorespiration process. Both reactions occur simultaneously and in competition at the same active site.</text>
</comment>
<comment type="catalytic activity">
    <reaction evidence="1">
        <text>2 (2R)-3-phosphoglycerate + 2 H(+) = D-ribulose 1,5-bisphosphate + CO2 + H2O</text>
        <dbReference type="Rhea" id="RHEA:23124"/>
        <dbReference type="ChEBI" id="CHEBI:15377"/>
        <dbReference type="ChEBI" id="CHEBI:15378"/>
        <dbReference type="ChEBI" id="CHEBI:16526"/>
        <dbReference type="ChEBI" id="CHEBI:57870"/>
        <dbReference type="ChEBI" id="CHEBI:58272"/>
        <dbReference type="EC" id="4.1.1.39"/>
    </reaction>
</comment>
<comment type="catalytic activity">
    <reaction evidence="1">
        <text>D-ribulose 1,5-bisphosphate + O2 = 2-phosphoglycolate + (2R)-3-phosphoglycerate + 2 H(+)</text>
        <dbReference type="Rhea" id="RHEA:36631"/>
        <dbReference type="ChEBI" id="CHEBI:15378"/>
        <dbReference type="ChEBI" id="CHEBI:15379"/>
        <dbReference type="ChEBI" id="CHEBI:57870"/>
        <dbReference type="ChEBI" id="CHEBI:58033"/>
        <dbReference type="ChEBI" id="CHEBI:58272"/>
    </reaction>
</comment>
<comment type="cofactor">
    <cofactor evidence="1">
        <name>Mg(2+)</name>
        <dbReference type="ChEBI" id="CHEBI:18420"/>
    </cofactor>
    <text evidence="1">Binds 1 Mg(2+) ion per subunit.</text>
</comment>
<comment type="subunit">
    <text evidence="1">Heterohexadecamer of 8 large chains and 8 small chains; disulfide-linked. The disulfide link is formed within the large subunit homodimers.</text>
</comment>
<comment type="subcellular location">
    <subcellularLocation>
        <location>Plastid</location>
        <location>Chloroplast</location>
    </subcellularLocation>
</comment>
<comment type="PTM">
    <text evidence="1">The disulfide bond which can form in the large chain dimeric partners within the hexadecamer appears to be associated with oxidative stress and protein turnover.</text>
</comment>
<comment type="miscellaneous">
    <text evidence="1">The basic functional RuBisCO is composed of a large chain homodimer in a 'head-to-tail' conformation. In form I RuBisCO this homodimer is arranged in a barrel-like tetramer with the small subunits forming a tetrameric 'cap' on each end of the 'barrel'.</text>
</comment>
<comment type="similarity">
    <text evidence="1">Belongs to the RuBisCO large chain family. Type I subfamily.</text>
</comment>
<gene>
    <name evidence="1" type="primary">rbcL</name>
</gene>
<feature type="propeptide" id="PRO_0000031363" evidence="1">
    <location>
        <begin position="1"/>
        <end position="2"/>
    </location>
</feature>
<feature type="chain" id="PRO_0000031364" description="Ribulose bisphosphate carboxylase large chain">
    <location>
        <begin position="3"/>
        <end position="475"/>
    </location>
</feature>
<feature type="active site" description="Proton acceptor" evidence="1">
    <location>
        <position position="175"/>
    </location>
</feature>
<feature type="active site" description="Proton acceptor" evidence="1">
    <location>
        <position position="294"/>
    </location>
</feature>
<feature type="binding site" description="in homodimeric partner" evidence="1">
    <location>
        <position position="123"/>
    </location>
    <ligand>
        <name>substrate</name>
    </ligand>
</feature>
<feature type="binding site" evidence="1">
    <location>
        <position position="173"/>
    </location>
    <ligand>
        <name>substrate</name>
    </ligand>
</feature>
<feature type="binding site" evidence="1">
    <location>
        <position position="177"/>
    </location>
    <ligand>
        <name>substrate</name>
    </ligand>
</feature>
<feature type="binding site" description="via carbamate group" evidence="1">
    <location>
        <position position="201"/>
    </location>
    <ligand>
        <name>Mg(2+)</name>
        <dbReference type="ChEBI" id="CHEBI:18420"/>
    </ligand>
</feature>
<feature type="binding site" evidence="1">
    <location>
        <position position="203"/>
    </location>
    <ligand>
        <name>Mg(2+)</name>
        <dbReference type="ChEBI" id="CHEBI:18420"/>
    </ligand>
</feature>
<feature type="binding site" evidence="1">
    <location>
        <position position="204"/>
    </location>
    <ligand>
        <name>Mg(2+)</name>
        <dbReference type="ChEBI" id="CHEBI:18420"/>
    </ligand>
</feature>
<feature type="binding site" evidence="1">
    <location>
        <position position="295"/>
    </location>
    <ligand>
        <name>substrate</name>
    </ligand>
</feature>
<feature type="binding site" evidence="1">
    <location>
        <position position="327"/>
    </location>
    <ligand>
        <name>substrate</name>
    </ligand>
</feature>
<feature type="binding site" evidence="1">
    <location>
        <position position="379"/>
    </location>
    <ligand>
        <name>substrate</name>
    </ligand>
</feature>
<feature type="site" description="Transition state stabilizer" evidence="1">
    <location>
        <position position="334"/>
    </location>
</feature>
<feature type="modified residue" description="N-acetylproline" evidence="1">
    <location>
        <position position="3"/>
    </location>
</feature>
<feature type="modified residue" description="N6,N6,N6-trimethyllysine" evidence="1">
    <location>
        <position position="14"/>
    </location>
</feature>
<feature type="modified residue" description="N6-carboxylysine" evidence="1">
    <location>
        <position position="201"/>
    </location>
</feature>
<feature type="disulfide bond" description="Interchain; in linked form" evidence="1">
    <location>
        <position position="247"/>
    </location>
</feature>
<evidence type="ECO:0000255" key="1">
    <source>
        <dbReference type="HAMAP-Rule" id="MF_01338"/>
    </source>
</evidence>
<keyword id="KW-0007">Acetylation</keyword>
<keyword id="KW-0113">Calvin cycle</keyword>
<keyword id="KW-0120">Carbon dioxide fixation</keyword>
<keyword id="KW-0150">Chloroplast</keyword>
<keyword id="KW-1015">Disulfide bond</keyword>
<keyword id="KW-0456">Lyase</keyword>
<keyword id="KW-0460">Magnesium</keyword>
<keyword id="KW-0479">Metal-binding</keyword>
<keyword id="KW-0488">Methylation</keyword>
<keyword id="KW-0503">Monooxygenase</keyword>
<keyword id="KW-0560">Oxidoreductase</keyword>
<keyword id="KW-0601">Photorespiration</keyword>
<keyword id="KW-0602">Photosynthesis</keyword>
<keyword id="KW-0934">Plastid</keyword>
<name>RBL_PINLO</name>
<proteinExistence type="inferred from homology"/>
<sequence>MSPKTETKASVGFKAGVKDYRLTYYTPEYQTKDTDILAAFRVTPQPGVPAEEAGAAVAAESSTGTWTTVWTDGLTSLDRYKGRCYDIEPVPGEETQFIAYVAYPLDLFEEGSVTNLFTSIVGNVFGFKALRALRLEDLRIPPAYSKTFQGPPHGIQVERDKLNKYGRPLLGCTIKPKLGLSAKNYGRAVYECLRGGLDFTKDDENVNSQPFMRWRDRFVFCAEAIYKAQAETGEIKGHYLNATAGTCEEMMKRAVFARELGVPIVMHDYLTGGFTANTSLAHYCRDNGLLLHIHRAMHAVIDRQRNHGMHFRVLAKALRMSGGDHIHAGTVVGKLEGERDVTLGFVDLLRDDFIEKDRSRGIYFTQDWVSMPGVLPVASGGIHVWHMPALTEIFGDDSVLQFGGGTLGHPWGNAPGAVANRVALEACVQARNEGRDLAREGNEVIREACKWSPELAAACEIWKEIKFEFDVIDRL</sequence>
<protein>
    <recommendedName>
        <fullName evidence="1">Ribulose bisphosphate carboxylase large chain</fullName>
        <shortName evidence="1">RuBisCO large subunit</shortName>
        <ecNumber evidence="1">4.1.1.39</ecNumber>
    </recommendedName>
</protein>